<accession>Q6DCG4</accession>
<comment type="function">
    <text evidence="1">Functions as a specific ammonium transporter.</text>
</comment>
<comment type="subcellular location">
    <subcellularLocation>
        <location evidence="1">Basolateral cell membrane</location>
        <topology evidence="1">Multi-pass membrane protein</topology>
    </subcellularLocation>
    <subcellularLocation>
        <location evidence="1">Cytoplasmic vesicle membrane</location>
        <topology evidence="1">Multi-pass membrane protein</topology>
    </subcellularLocation>
</comment>
<comment type="similarity">
    <text evidence="3">Belongs to the ammonium transporter (TC 2.A.49) family. Rh subfamily.</text>
</comment>
<proteinExistence type="evidence at transcript level"/>
<gene>
    <name type="primary">rhbg-b</name>
</gene>
<feature type="chain" id="PRO_0000283611" description="Ammonium transporter Rh type B-B">
    <location>
        <begin position="1"/>
        <end position="460"/>
    </location>
</feature>
<feature type="topological domain" description="Cytoplasmic" evidence="2">
    <location>
        <begin position="1"/>
        <end position="10"/>
    </location>
</feature>
<feature type="transmembrane region" description="Helical" evidence="2">
    <location>
        <begin position="11"/>
        <end position="31"/>
    </location>
</feature>
<feature type="topological domain" description="Extracellular" evidence="2">
    <location>
        <begin position="32"/>
        <end position="62"/>
    </location>
</feature>
<feature type="transmembrane region" description="Helical" evidence="2">
    <location>
        <begin position="63"/>
        <end position="83"/>
    </location>
</feature>
<feature type="topological domain" description="Cytoplasmic" evidence="2">
    <location>
        <begin position="84"/>
        <end position="87"/>
    </location>
</feature>
<feature type="transmembrane region" description="Helical" evidence="2">
    <location>
        <begin position="88"/>
        <end position="108"/>
    </location>
</feature>
<feature type="topological domain" description="Extracellular" evidence="2">
    <location>
        <begin position="109"/>
        <end position="125"/>
    </location>
</feature>
<feature type="transmembrane region" description="Helical" evidence="2">
    <location>
        <begin position="126"/>
        <end position="146"/>
    </location>
</feature>
<feature type="topological domain" description="Cytoplasmic" evidence="2">
    <location>
        <begin position="147"/>
        <end position="150"/>
    </location>
</feature>
<feature type="transmembrane region" description="Helical" evidence="2">
    <location>
        <begin position="151"/>
        <end position="171"/>
    </location>
</feature>
<feature type="topological domain" description="Extracellular" evidence="2">
    <location>
        <begin position="172"/>
        <end position="179"/>
    </location>
</feature>
<feature type="transmembrane region" description="Helical" evidence="2">
    <location>
        <begin position="180"/>
        <end position="202"/>
    </location>
</feature>
<feature type="topological domain" description="Cytoplasmic" evidence="2">
    <location>
        <begin position="203"/>
        <end position="220"/>
    </location>
</feature>
<feature type="transmembrane region" description="Helical" evidence="2">
    <location>
        <begin position="221"/>
        <end position="241"/>
    </location>
</feature>
<feature type="topological domain" description="Extracellular" evidence="2">
    <location>
        <begin position="242"/>
        <end position="252"/>
    </location>
</feature>
<feature type="transmembrane region" description="Helical" evidence="2">
    <location>
        <begin position="253"/>
        <end position="273"/>
    </location>
</feature>
<feature type="topological domain" description="Cytoplasmic" evidence="2">
    <location>
        <begin position="274"/>
        <end position="283"/>
    </location>
</feature>
<feature type="transmembrane region" description="Helical" evidence="2">
    <location>
        <begin position="284"/>
        <end position="304"/>
    </location>
</feature>
<feature type="topological domain" description="Extracellular" evidence="2">
    <location>
        <position position="305"/>
    </location>
</feature>
<feature type="transmembrane region" description="Helical" evidence="2">
    <location>
        <begin position="306"/>
        <end position="326"/>
    </location>
</feature>
<feature type="topological domain" description="Cytoplasmic" evidence="2">
    <location>
        <begin position="327"/>
        <end position="347"/>
    </location>
</feature>
<feature type="transmembrane region" description="Helical" evidence="2">
    <location>
        <begin position="348"/>
        <end position="368"/>
    </location>
</feature>
<feature type="topological domain" description="Extracellular" evidence="2">
    <location>
        <begin position="369"/>
        <end position="394"/>
    </location>
</feature>
<feature type="transmembrane region" description="Helical" evidence="2">
    <location>
        <begin position="395"/>
        <end position="415"/>
    </location>
</feature>
<feature type="topological domain" description="Cytoplasmic" evidence="2">
    <location>
        <begin position="416"/>
        <end position="460"/>
    </location>
</feature>
<feature type="glycosylation site" description="N-linked (GlcNAc...) asparagine" evidence="2">
    <location>
        <position position="48"/>
    </location>
</feature>
<name>RHBGB_XENLA</name>
<organism>
    <name type="scientific">Xenopus laevis</name>
    <name type="common">African clawed frog</name>
    <dbReference type="NCBI Taxonomy" id="8355"/>
    <lineage>
        <taxon>Eukaryota</taxon>
        <taxon>Metazoa</taxon>
        <taxon>Chordata</taxon>
        <taxon>Craniata</taxon>
        <taxon>Vertebrata</taxon>
        <taxon>Euteleostomi</taxon>
        <taxon>Amphibia</taxon>
        <taxon>Batrachia</taxon>
        <taxon>Anura</taxon>
        <taxon>Pipoidea</taxon>
        <taxon>Pipidae</taxon>
        <taxon>Xenopodinae</taxon>
        <taxon>Xenopus</taxon>
        <taxon>Xenopus</taxon>
    </lineage>
</organism>
<dbReference type="EMBL" id="BC078079">
    <property type="protein sequence ID" value="AAH78079.1"/>
    <property type="molecule type" value="mRNA"/>
</dbReference>
<dbReference type="RefSeq" id="NP_001087152.1">
    <property type="nucleotide sequence ID" value="NM_001093683.1"/>
</dbReference>
<dbReference type="SMR" id="Q6DCG4"/>
<dbReference type="GlyCosmos" id="Q6DCG4">
    <property type="glycosylation" value="1 site, No reported glycans"/>
</dbReference>
<dbReference type="DNASU" id="447041"/>
<dbReference type="AGR" id="Xenbase:XB-GENE-1009293"/>
<dbReference type="Xenbase" id="XB-GENE-1009293">
    <property type="gene designation" value="rhbg.S"/>
</dbReference>
<dbReference type="Proteomes" id="UP000186698">
    <property type="component" value="Unplaced"/>
</dbReference>
<dbReference type="Bgee" id="447041">
    <property type="expression patterns" value="Expressed in kidney and 12 other cell types or tissues"/>
</dbReference>
<dbReference type="GO" id="GO:0016323">
    <property type="term" value="C:basolateral plasma membrane"/>
    <property type="evidence" value="ECO:0007669"/>
    <property type="project" value="UniProtKB-SubCell"/>
</dbReference>
<dbReference type="GO" id="GO:0030659">
    <property type="term" value="C:cytoplasmic vesicle membrane"/>
    <property type="evidence" value="ECO:0007669"/>
    <property type="project" value="UniProtKB-SubCell"/>
</dbReference>
<dbReference type="GO" id="GO:0005886">
    <property type="term" value="C:plasma membrane"/>
    <property type="evidence" value="ECO:0000318"/>
    <property type="project" value="GO_Central"/>
</dbReference>
<dbReference type="GO" id="GO:0008519">
    <property type="term" value="F:ammonium channel activity"/>
    <property type="evidence" value="ECO:0000318"/>
    <property type="project" value="GO_Central"/>
</dbReference>
<dbReference type="GO" id="GO:0097272">
    <property type="term" value="P:ammonium homeostasis"/>
    <property type="evidence" value="ECO:0000318"/>
    <property type="project" value="GO_Central"/>
</dbReference>
<dbReference type="GO" id="GO:0072488">
    <property type="term" value="P:ammonium transmembrane transport"/>
    <property type="evidence" value="ECO:0000318"/>
    <property type="project" value="GO_Central"/>
</dbReference>
<dbReference type="FunFam" id="1.10.3430.10:FF:000001">
    <property type="entry name" value="Ammonium transporter Rh type C"/>
    <property type="match status" value="1"/>
</dbReference>
<dbReference type="Gene3D" id="1.10.3430.10">
    <property type="entry name" value="Ammonium transporter AmtB like domains"/>
    <property type="match status" value="1"/>
</dbReference>
<dbReference type="InterPro" id="IPR029020">
    <property type="entry name" value="Ammonium/urea_transptr"/>
</dbReference>
<dbReference type="InterPro" id="IPR024041">
    <property type="entry name" value="NH4_transpt_AmtB-like_dom"/>
</dbReference>
<dbReference type="InterPro" id="IPR002229">
    <property type="entry name" value="RhesusRHD"/>
</dbReference>
<dbReference type="PANTHER" id="PTHR11730">
    <property type="entry name" value="AMMONIUM TRANSPORTER"/>
    <property type="match status" value="1"/>
</dbReference>
<dbReference type="PANTHER" id="PTHR11730:SF42">
    <property type="entry name" value="AMMONIUM TRANSPORTER RH TYPE B"/>
    <property type="match status" value="1"/>
</dbReference>
<dbReference type="Pfam" id="PF00909">
    <property type="entry name" value="Ammonium_transp"/>
    <property type="match status" value="1"/>
</dbReference>
<dbReference type="PRINTS" id="PR00342">
    <property type="entry name" value="RHESUSRHD"/>
</dbReference>
<dbReference type="SUPFAM" id="SSF111352">
    <property type="entry name" value="Ammonium transporter"/>
    <property type="match status" value="1"/>
</dbReference>
<keyword id="KW-0924">Ammonia transport</keyword>
<keyword id="KW-1003">Cell membrane</keyword>
<keyword id="KW-0968">Cytoplasmic vesicle</keyword>
<keyword id="KW-0325">Glycoprotein</keyword>
<keyword id="KW-0472">Membrane</keyword>
<keyword id="KW-1185">Reference proteome</keyword>
<keyword id="KW-0812">Transmembrane</keyword>
<keyword id="KW-1133">Transmembrane helix</keyword>
<keyword id="KW-0813">Transport</keyword>
<evidence type="ECO:0000250" key="1"/>
<evidence type="ECO:0000255" key="2"/>
<evidence type="ECO:0000305" key="3"/>
<sequence>MTSYSTNMRIKLPLFCLLLQFITIILFAVFVRYDHESDARGWHEELNNHSSSNADNDFYYRYPSFQDVHVMIFIGFGFLMTFLKRYGFSSVAFNFLIAAFGLQWSTLIQGFFHGFHDGKIHVGIESMINADFCTGAVLISFGAVLGKTSPVQLIIMTLVEVTLFGINEYIILNIVGAKDAGGSMTIHTFGAYFGLIVSRVLYREDLEKSRQREGSVYHSDLFAMIGTIYLWMFWPSFNSAVTAHGDDQHRTVMNTYYSLAACTLATFGFSALLNGEGKLDMVHIQNAALAGGVAVGTSGEMMLTPFGAMIAGTLAGMISVLGYKYLTPVLDSKLKIQDTCGVHNLHGMPGILGAIIGAIVALFATADIYGDGMGDVFPLISDGSRTAKQQSLYQFLALLVALGFAIIGGTVVGFILKLPIFGTPSDAECFEDAIYWEVPGGEGHQQLTVVINNEDPDTQA</sequence>
<reference key="1">
    <citation type="submission" date="2004-07" db="EMBL/GenBank/DDBJ databases">
        <authorList>
            <consortium name="NIH - Xenopus Gene Collection (XGC) project"/>
        </authorList>
    </citation>
    <scope>NUCLEOTIDE SEQUENCE [LARGE SCALE MRNA]</scope>
    <source>
        <tissue>Embryo</tissue>
    </source>
</reference>
<protein>
    <recommendedName>
        <fullName>Ammonium transporter Rh type B-B</fullName>
    </recommendedName>
    <alternativeName>
        <fullName>Rhesus blood group family type B glycoprotein B</fullName>
        <shortName>Rh family type B glycoprotein B</shortName>
        <shortName>Rh type B glycoprotein B</shortName>
    </alternativeName>
</protein>